<evidence type="ECO:0000250" key="1">
    <source>
        <dbReference type="UniProtKB" id="P9WGR1"/>
    </source>
</evidence>
<evidence type="ECO:0000269" key="2">
    <source>
    </source>
</evidence>
<evidence type="ECO:0000269" key="3">
    <source>
    </source>
</evidence>
<evidence type="ECO:0000269" key="4">
    <source>
    </source>
</evidence>
<evidence type="ECO:0000269" key="5">
    <source>
    </source>
</evidence>
<evidence type="ECO:0000269" key="6">
    <source>
    </source>
</evidence>
<evidence type="ECO:0000303" key="7">
    <source>
    </source>
</evidence>
<evidence type="ECO:0000303" key="8">
    <source>
    </source>
</evidence>
<evidence type="ECO:0000305" key="9"/>
<evidence type="ECO:0000305" key="10">
    <source>
    </source>
</evidence>
<evidence type="ECO:0000305" key="11">
    <source>
    </source>
</evidence>
<evidence type="ECO:0000305" key="12">
    <source>
    </source>
</evidence>
<organism>
    <name type="scientific">Mycolicibacterium smegmatis (strain ATCC 700084 / mc(2)155)</name>
    <name type="common">Mycobacterium smegmatis</name>
    <dbReference type="NCBI Taxonomy" id="246196"/>
    <lineage>
        <taxon>Bacteria</taxon>
        <taxon>Bacillati</taxon>
        <taxon>Actinomycetota</taxon>
        <taxon>Actinomycetes</taxon>
        <taxon>Mycobacteriales</taxon>
        <taxon>Mycobacteriaceae</taxon>
        <taxon>Mycolicibacterium</taxon>
    </lineage>
</organism>
<name>INHA_MYCS2</name>
<accession>P42829</accession>
<accession>A0QX28</accession>
<accession>I7GAK9</accession>
<protein>
    <recommendedName>
        <fullName evidence="7">Enoyl-[acyl-carrier-protein] reductase [NADH]</fullName>
        <shortName evidence="1">ENR</shortName>
        <shortName evidence="7">Enoyl-ACP reductase</shortName>
        <ecNumber evidence="11">1.3.1.9</ecNumber>
    </recommendedName>
    <alternativeName>
        <fullName evidence="7">FAS-II enoyl-ACP reductase</fullName>
    </alternativeName>
    <alternativeName>
        <fullName evidence="11">NADH-dependent 2-trans-enoyl-ACP reductase</fullName>
    </alternativeName>
</protein>
<gene>
    <name evidence="8" type="primary">inhA</name>
    <name type="ordered locus">MSMEG_3151</name>
    <name type="ordered locus">MSMEI_3070</name>
</gene>
<dbReference type="EC" id="1.3.1.9" evidence="11"/>
<dbReference type="EMBL" id="U02530">
    <property type="protein sequence ID" value="AAC43211.1"/>
    <property type="molecule type" value="Unassigned_DNA"/>
</dbReference>
<dbReference type="EMBL" id="CP000480">
    <property type="protein sequence ID" value="ABK73247.1"/>
    <property type="molecule type" value="Genomic_DNA"/>
</dbReference>
<dbReference type="EMBL" id="CP001663">
    <property type="protein sequence ID" value="AFP39534.1"/>
    <property type="molecule type" value="Genomic_DNA"/>
</dbReference>
<dbReference type="RefSeq" id="WP_003894540.1">
    <property type="nucleotide sequence ID" value="NZ_SIJM01000002.1"/>
</dbReference>
<dbReference type="RefSeq" id="YP_887466.1">
    <property type="nucleotide sequence ID" value="NC_008596.1"/>
</dbReference>
<dbReference type="SMR" id="P42829"/>
<dbReference type="STRING" id="246196.MSMEG_3151"/>
<dbReference type="PaxDb" id="246196-MSMEI_3070"/>
<dbReference type="GeneID" id="93457924"/>
<dbReference type="KEGG" id="msb:LJ00_15670"/>
<dbReference type="KEGG" id="msg:MSMEI_3070"/>
<dbReference type="KEGG" id="msm:MSMEG_3151"/>
<dbReference type="PATRIC" id="fig|246196.19.peg.3112"/>
<dbReference type="eggNOG" id="COG0623">
    <property type="taxonomic scope" value="Bacteria"/>
</dbReference>
<dbReference type="OrthoDB" id="9803628at2"/>
<dbReference type="BRENDA" id="1.3.1.118">
    <property type="organism ID" value="3512"/>
</dbReference>
<dbReference type="BRENDA" id="1.3.1.9">
    <property type="organism ID" value="3512"/>
</dbReference>
<dbReference type="UniPathway" id="UPA00915"/>
<dbReference type="Proteomes" id="UP000000757">
    <property type="component" value="Chromosome"/>
</dbReference>
<dbReference type="Proteomes" id="UP000006158">
    <property type="component" value="Chromosome"/>
</dbReference>
<dbReference type="GO" id="GO:0005576">
    <property type="term" value="C:extracellular region"/>
    <property type="evidence" value="ECO:0007669"/>
    <property type="project" value="UniProtKB-KW"/>
</dbReference>
<dbReference type="GO" id="GO:0004318">
    <property type="term" value="F:enoyl-[acyl-carrier-protein] reductase (NADH) activity"/>
    <property type="evidence" value="ECO:0007669"/>
    <property type="project" value="UniProtKB-EC"/>
</dbReference>
<dbReference type="GO" id="GO:0050343">
    <property type="term" value="F:trans-2-enoyl-CoA reductase (NADH) activity"/>
    <property type="evidence" value="ECO:0007669"/>
    <property type="project" value="RHEA"/>
</dbReference>
<dbReference type="GO" id="GO:0006633">
    <property type="term" value="P:fatty acid biosynthetic process"/>
    <property type="evidence" value="ECO:0007669"/>
    <property type="project" value="UniProtKB-KW"/>
</dbReference>
<dbReference type="GO" id="GO:0046677">
    <property type="term" value="P:response to antibiotic"/>
    <property type="evidence" value="ECO:0007669"/>
    <property type="project" value="UniProtKB-KW"/>
</dbReference>
<dbReference type="CDD" id="cd05372">
    <property type="entry name" value="ENR_SDR"/>
    <property type="match status" value="1"/>
</dbReference>
<dbReference type="Gene3D" id="3.40.50.720">
    <property type="entry name" value="NAD(P)-binding Rossmann-like Domain"/>
    <property type="match status" value="1"/>
</dbReference>
<dbReference type="InterPro" id="IPR014358">
    <property type="entry name" value="Enoyl-ACP_Rdtase_NADH"/>
</dbReference>
<dbReference type="InterPro" id="IPR053410">
    <property type="entry name" value="Mycobact_enoyl-ACP_red"/>
</dbReference>
<dbReference type="InterPro" id="IPR036291">
    <property type="entry name" value="NAD(P)-bd_dom_sf"/>
</dbReference>
<dbReference type="InterPro" id="IPR002347">
    <property type="entry name" value="SDR_fam"/>
</dbReference>
<dbReference type="NCBIfam" id="NF040631">
    <property type="entry name" value="InhA"/>
    <property type="match status" value="1"/>
</dbReference>
<dbReference type="NCBIfam" id="NF005908">
    <property type="entry name" value="PRK07889.1"/>
    <property type="match status" value="1"/>
</dbReference>
<dbReference type="PANTHER" id="PTHR43159">
    <property type="entry name" value="ENOYL-[ACYL-CARRIER-PROTEIN] REDUCTASE"/>
    <property type="match status" value="1"/>
</dbReference>
<dbReference type="PANTHER" id="PTHR43159:SF2">
    <property type="entry name" value="ENOYL-[ACYL-CARRIER-PROTEIN] REDUCTASE [NADH], CHLOROPLASTIC"/>
    <property type="match status" value="1"/>
</dbReference>
<dbReference type="Pfam" id="PF13561">
    <property type="entry name" value="adh_short_C2"/>
    <property type="match status" value="1"/>
</dbReference>
<dbReference type="PIRSF" id="PIRSF000094">
    <property type="entry name" value="Enoyl-ACP_rdct"/>
    <property type="match status" value="1"/>
</dbReference>
<dbReference type="SUPFAM" id="SSF51735">
    <property type="entry name" value="NAD(P)-binding Rossmann-fold domains"/>
    <property type="match status" value="1"/>
</dbReference>
<keyword id="KW-0046">Antibiotic resistance</keyword>
<keyword id="KW-0134">Cell wall</keyword>
<keyword id="KW-0275">Fatty acid biosynthesis</keyword>
<keyword id="KW-0276">Fatty acid metabolism</keyword>
<keyword id="KW-0444">Lipid biosynthesis</keyword>
<keyword id="KW-0443">Lipid metabolism</keyword>
<keyword id="KW-0520">NAD</keyword>
<keyword id="KW-0560">Oxidoreductase</keyword>
<keyword id="KW-0597">Phosphoprotein</keyword>
<keyword id="KW-1185">Reference proteome</keyword>
<keyword id="KW-0964">Secreted</keyword>
<comment type="function">
    <text evidence="1 2 3">Enoyl-ACP reductase of the type II fatty acid syntase (FAS-II) system, which is involved in the biosynthesis of mycolic acids, a major component of mycobacterial cell walls (PubMed:10708367). Catalyzes the NADH-dependent reduction of the double bond of 2-trans-enoyl-[acyl-carrier protein], an essential step in the fatty acid elongation cycle of the FAS-II pathway (PubMed:10708367, PubMed:10869086). Shows preference for long-chain fatty acyl thioester substrates (&gt;C16), and can also use 2-trans-enoyl-CoAs as alternative substrates (By similarity). The mycobacterial FAS-II system utilizes the products of the FAS-I system as primers to extend fatty acyl chain lengths up to C56, forming the meromycolate chain that serves as the precursor for final mycolic acids (PubMed:10708367, PubMed:10869086).</text>
</comment>
<comment type="function">
    <text evidence="1 3 4">Is the primary target of the first-line antitubercular drug isoniazid (INH) and of the second-line drug ethionamide (ETH) (PubMed:10869086, PubMed:12406221). Overexpressed inhA confers INH and ETH resistance to M.smegmatis (PubMed:12406221). The mechanism of isoniazid action against InhA is covalent attachment of the activated form of the drug to the nicotinamide ring of NAD and binding of the INH-NAD adduct to the active site of InhA (By similarity). Similarly, the ETH-NAD adduct binds InhA (By similarity).</text>
</comment>
<comment type="catalytic activity">
    <reaction evidence="11">
        <text>a 2,3-saturated acyl-[ACP] + NAD(+) = a (2E)-enoyl-[ACP] + NADH + H(+)</text>
        <dbReference type="Rhea" id="RHEA:10240"/>
        <dbReference type="Rhea" id="RHEA-COMP:9925"/>
        <dbReference type="Rhea" id="RHEA-COMP:9926"/>
        <dbReference type="ChEBI" id="CHEBI:15378"/>
        <dbReference type="ChEBI" id="CHEBI:57540"/>
        <dbReference type="ChEBI" id="CHEBI:57945"/>
        <dbReference type="ChEBI" id="CHEBI:78784"/>
        <dbReference type="ChEBI" id="CHEBI:78785"/>
        <dbReference type="EC" id="1.3.1.9"/>
    </reaction>
    <physiologicalReaction direction="right-to-left" evidence="11">
        <dbReference type="Rhea" id="RHEA:10242"/>
    </physiologicalReaction>
</comment>
<comment type="catalytic activity">
    <reaction evidence="3">
        <text>a 2,3-saturated acyl-CoA + NAD(+) = a (2E)-enoyl-CoA + NADH + H(+)</text>
        <dbReference type="Rhea" id="RHEA:18177"/>
        <dbReference type="ChEBI" id="CHEBI:15378"/>
        <dbReference type="ChEBI" id="CHEBI:57540"/>
        <dbReference type="ChEBI" id="CHEBI:57945"/>
        <dbReference type="ChEBI" id="CHEBI:58856"/>
        <dbReference type="ChEBI" id="CHEBI:65111"/>
    </reaction>
    <physiologicalReaction direction="right-to-left" evidence="11">
        <dbReference type="Rhea" id="RHEA:18179"/>
    </physiologicalReaction>
</comment>
<comment type="catalytic activity">
    <reaction evidence="3">
        <text>(2E)-octenoyl-CoA + NADH + H(+) = octanoyl-CoA + NAD(+)</text>
        <dbReference type="Rhea" id="RHEA:63232"/>
        <dbReference type="ChEBI" id="CHEBI:15378"/>
        <dbReference type="ChEBI" id="CHEBI:57386"/>
        <dbReference type="ChEBI" id="CHEBI:57540"/>
        <dbReference type="ChEBI" id="CHEBI:57945"/>
        <dbReference type="ChEBI" id="CHEBI:62242"/>
    </reaction>
    <physiologicalReaction direction="left-to-right" evidence="11">
        <dbReference type="Rhea" id="RHEA:63233"/>
    </physiologicalReaction>
</comment>
<comment type="catalytic activity">
    <reaction evidence="3">
        <text>(2E)-dodecenoyl-CoA + NADH + H(+) = dodecanoyl-CoA + NAD(+)</text>
        <dbReference type="Rhea" id="RHEA:45408"/>
        <dbReference type="ChEBI" id="CHEBI:15378"/>
        <dbReference type="ChEBI" id="CHEBI:57330"/>
        <dbReference type="ChEBI" id="CHEBI:57375"/>
        <dbReference type="ChEBI" id="CHEBI:57540"/>
        <dbReference type="ChEBI" id="CHEBI:57945"/>
    </reaction>
    <physiologicalReaction direction="left-to-right" evidence="11">
        <dbReference type="Rhea" id="RHEA:45409"/>
    </physiologicalReaction>
</comment>
<comment type="activity regulation">
    <text evidence="1 10 12">InhA activity is controlled via phosphorylation: phosphorylation on Thr-266 decreases InhA activity and likely negatively regulates biosynthesis of mycolic acids and growth of the bacterium (By similarity) (PubMed:20864541). InhA activity is likely inhibited by activated isoniazid, hexadecynoyl-CoA and octadecynoyl-CoA, which also block the biosynthesis of mycolic acids (PubMed:10708367). The antitubercular pro-drug isoniazid (INH) is oxidatively activated by the catalase-peroxidase KatG and then covalently binds NAD to form an adduct that inhibits the activity of InhA (By similarity). The inhibitory adduct is the isonicotinic-acyl-NADH where the isonicotinic-acyl group replaces the 4S (and not the 4R) hydrogen of NADH (By similarity). Similarly, the antitubercular pro-drugs ethionamide (ETH) and prothionamide (PTH) are activated by the flavoprotein monooxygenase EthA, and forms an adduct with NAD (ETH-NAD and PTH-NAD, respectively) that is a tight-binding inhibitor of InhA (By similarity).</text>
</comment>
<comment type="pathway">
    <text evidence="2 3">Lipid metabolism; mycolic acid biosynthesis.</text>
</comment>
<comment type="subunit">
    <text evidence="1">Homodimer. Homotetramer.</text>
</comment>
<comment type="subcellular location">
    <subcellularLocation>
        <location evidence="2">Secreted</location>
        <location evidence="2">Cell wall</location>
    </subcellularLocation>
</comment>
<comment type="PTM">
    <text evidence="1 5">Is phosphorylated in vivo (PubMed:20864541). Phosphorylation on Thr-266 decreases enzymatic activity (By similarity).</text>
</comment>
<comment type="similarity">
    <text evidence="9">Belongs to the short-chain dehydrogenases/reductases (SDR) family. FabI subfamily.</text>
</comment>
<sequence>MTGLLEGKRILVTGIITDSSIAFHIAKVAQEAGAELVLTGFDRLKLVKRIADRLPKPAPLLELDVQNEEHLSTLADRITAEIGEGNKIDGVVHSIGFMPQSGMGINPFFDAPYEDVSKGIHISAYSYASLAKAVLPIMNPGGGIVGMDFDPTRAMPAYNWMTVAKSALESVNRFVAREAGKVGVRSNLVAAGPIRTLAMSAIVGGALGDEAGQQMQLLEEGWDQRAPLGWNMKDPTPVAKTVCALLSDWLPATTGTVIYADGGASTQLL</sequence>
<feature type="chain" id="PRO_0000054913" description="Enoyl-[acyl-carrier-protein] reductase [NADH]">
    <location>
        <begin position="1"/>
        <end position="269"/>
    </location>
</feature>
<feature type="binding site" evidence="1">
    <location>
        <begin position="20"/>
        <end position="21"/>
    </location>
    <ligand>
        <name>NAD(+)</name>
        <dbReference type="ChEBI" id="CHEBI:57540"/>
    </ligand>
</feature>
<feature type="binding site" evidence="1">
    <location>
        <begin position="64"/>
        <end position="65"/>
    </location>
    <ligand>
        <name>NAD(+)</name>
        <dbReference type="ChEBI" id="CHEBI:57540"/>
    </ligand>
</feature>
<feature type="binding site" evidence="1">
    <location>
        <begin position="95"/>
        <end position="96"/>
    </location>
    <ligand>
        <name>NAD(+)</name>
        <dbReference type="ChEBI" id="CHEBI:57540"/>
    </ligand>
</feature>
<feature type="binding site" evidence="1">
    <location>
        <position position="158"/>
    </location>
    <ligand>
        <name>substrate</name>
    </ligand>
</feature>
<feature type="binding site" evidence="1">
    <location>
        <position position="165"/>
    </location>
    <ligand>
        <name>NAD(+)</name>
        <dbReference type="ChEBI" id="CHEBI:57540"/>
    </ligand>
</feature>
<feature type="binding site" evidence="1">
    <location>
        <position position="194"/>
    </location>
    <ligand>
        <name>NAD(+)</name>
        <dbReference type="ChEBI" id="CHEBI:57540"/>
    </ligand>
</feature>
<feature type="site" description="May act as an intermediate that passes the hydride ion from NADH to the substrate" evidence="1">
    <location>
        <position position="149"/>
    </location>
</feature>
<feature type="site" description="Transition state stabilizer" evidence="1">
    <location>
        <position position="158"/>
    </location>
</feature>
<feature type="modified residue" description="Phosphothreonine" evidence="1">
    <location>
        <position position="266"/>
    </location>
</feature>
<feature type="sequence variant" description="In strain: mc(2)651; INH- and ETH-resistant." evidence="6">
    <original>S</original>
    <variation>A</variation>
    <location>
        <position position="94"/>
    </location>
</feature>
<feature type="mutagenesis site" description="Thermosensitive mutant that shows high resistance to INH and ETH. Displays total loss of catalytic activity at 42 degrees Celsius. Thermal inactivation of InhA in M.smegmatis results in the inhibition of mycolic acid biosynthesis, a decrease in hexadecanoic acid (C(16:0)) and a concomitant increase of tetracosanoic acid (C(24:0)) in a manner equivalent to that seen in INH-treated cells. Moreover, the InhA-inactivated cells, like INH-treated cells, undergo a drastic morphological change, leading to cell lysis." evidence="3">
    <original>V</original>
    <variation>F</variation>
    <location>
        <position position="238"/>
    </location>
</feature>
<reference key="1">
    <citation type="journal article" date="1994" name="Science">
        <title>inhA, a gene encoding a target for isoniazid and ethionamide in Mycobacterium tuberculosis.</title>
        <authorList>
            <person name="Banerjee A."/>
            <person name="Dubnau E."/>
            <person name="Quemard A."/>
            <person name="Balasubramanian V."/>
            <person name="Um K.S."/>
            <person name="Wilson T."/>
            <person name="Collins D."/>
            <person name="de Lisle G."/>
            <person name="Jacobs W.R. Jr."/>
        </authorList>
    </citation>
    <scope>NUCLEOTIDE SEQUENCE [GENOMIC DNA]</scope>
    <scope>CHARACTERIZATION OF VARIANT SER-94</scope>
    <scope>DRUG RESISTANCE</scope>
</reference>
<reference key="2">
    <citation type="submission" date="2006-10" db="EMBL/GenBank/DDBJ databases">
        <authorList>
            <person name="Fleischmann R.D."/>
            <person name="Dodson R.J."/>
            <person name="Haft D.H."/>
            <person name="Merkel J.S."/>
            <person name="Nelson W.C."/>
            <person name="Fraser C.M."/>
        </authorList>
    </citation>
    <scope>NUCLEOTIDE SEQUENCE [LARGE SCALE GENOMIC DNA]</scope>
    <source>
        <strain>ATCC 700084 / mc(2)155</strain>
    </source>
</reference>
<reference key="3">
    <citation type="journal article" date="2007" name="Genome Biol.">
        <title>Interrupted coding sequences in Mycobacterium smegmatis: authentic mutations or sequencing errors?</title>
        <authorList>
            <person name="Deshayes C."/>
            <person name="Perrodou E."/>
            <person name="Gallien S."/>
            <person name="Euphrasie D."/>
            <person name="Schaeffer C."/>
            <person name="Van-Dorsselaer A."/>
            <person name="Poch O."/>
            <person name="Lecompte O."/>
            <person name="Reyrat J.-M."/>
        </authorList>
    </citation>
    <scope>NUCLEOTIDE SEQUENCE [LARGE SCALE GENOMIC DNA]</scope>
    <source>
        <strain>ATCC 700084 / mc(2)155</strain>
    </source>
</reference>
<reference key="4">
    <citation type="journal article" date="2009" name="Genome Res.">
        <title>Ortho-proteogenomics: multiple proteomes investigation through orthology and a new MS-based protocol.</title>
        <authorList>
            <person name="Gallien S."/>
            <person name="Perrodou E."/>
            <person name="Carapito C."/>
            <person name="Deshayes C."/>
            <person name="Reyrat J.-M."/>
            <person name="Van Dorsselaer A."/>
            <person name="Poch O."/>
            <person name="Schaeffer C."/>
            <person name="Lecompte O."/>
        </authorList>
    </citation>
    <scope>NUCLEOTIDE SEQUENCE [LARGE SCALE GENOMIC DNA]</scope>
    <source>
        <strain>ATCC 700084 / mc(2)155</strain>
    </source>
</reference>
<reference key="5">
    <citation type="journal article" date="2000" name="J. Bacteriol.">
        <title>Inactivation of the inhA-encoded fatty acid synthase II (FASII) enoyl-acyl carrier protein reductase induces accumulation of the FASI end products and cell lysis of Mycobacterium smegmatis.</title>
        <authorList>
            <person name="Vilcheze C."/>
            <person name="Morbidoni H.R."/>
            <person name="Weisbrod T.R."/>
            <person name="Iwamoto H."/>
            <person name="Kuo M."/>
            <person name="Sacchettini J.C."/>
            <person name="Jacobs W.R. Jr."/>
        </authorList>
    </citation>
    <scope>FUNCTION</scope>
    <scope>CATALYTIC ACTIVITY</scope>
    <scope>DRUG TARGET</scope>
    <scope>PATHWAY</scope>
    <scope>MUTAGENESIS OF VAL-238</scope>
    <source>
        <strain>ATCC 700084 / mc(2)155</strain>
    </source>
</reference>
<reference key="6">
    <citation type="journal article" date="2000" name="Microbiology">
        <title>InhA, a target of the antituberculous drug isoniazid, is involved in a mycobacterial fatty acid elongation system, FAS-II.</title>
        <authorList>
            <person name="Marrakchi H."/>
            <person name="Laneelle G."/>
            <person name="Quemard A."/>
        </authorList>
    </citation>
    <scope>FUNCTION IN THE FAS-II SYSTEM</scope>
    <scope>ACTIVITY REGULATION</scope>
    <scope>PATHWAY</scope>
    <scope>SUBCELLULAR LOCATION</scope>
    <source>
        <strain>ATCC 700084 / mc(2)155</strain>
    </source>
</reference>
<reference key="7">
    <citation type="journal article" date="2002" name="Mol. Microbiol.">
        <title>Overexpression of inhA, but not kasA, confers resistance to isoniazid and ethionamide in Mycobacterium smegmatis, M. bovis BCG and M. tuberculosis.</title>
        <authorList>
            <person name="Larsen M.H."/>
            <person name="Vilcheze C."/>
            <person name="Kremer L."/>
            <person name="Besra G.S."/>
            <person name="Parsons L."/>
            <person name="Salfinger M."/>
            <person name="Heifets L."/>
            <person name="Hazbon M.H."/>
            <person name="Alland D."/>
            <person name="Sacchettini J.C."/>
            <person name="Jacobs W.R. Jr."/>
        </authorList>
    </citation>
    <scope>DRUG TARGET</scope>
    <scope>DRUG RESISTANCE</scope>
    <source>
        <strain>ATCC 700084 / mc(2)155</strain>
    </source>
</reference>
<reference key="8">
    <citation type="journal article" date="2010" name="J. Biol. Chem.">
        <title>Phosphorylation of enoyl-acyl carrier protein reductase InhA impacts mycobacterial growth and survival.</title>
        <authorList>
            <person name="Khan S."/>
            <person name="Nagarajan S.N."/>
            <person name="Parikh A."/>
            <person name="Samantaray S."/>
            <person name="Singh A."/>
            <person name="Kumar D."/>
            <person name="Roy R.P."/>
            <person name="Bhatt A."/>
            <person name="Nandicoori V.K."/>
        </authorList>
    </citation>
    <scope>PHOSPHORYLATION AT THR-266</scope>
    <scope>ACTIVITY REGULATION</scope>
    <source>
        <strain>H37Rv</strain>
    </source>
</reference>
<proteinExistence type="evidence at protein level"/>